<keyword id="KW-0240">DNA-directed RNA polymerase</keyword>
<keyword id="KW-0548">Nucleotidyltransferase</keyword>
<keyword id="KW-1185">Reference proteome</keyword>
<keyword id="KW-0804">Transcription</keyword>
<keyword id="KW-0808">Transferase</keyword>
<name>RPOZ_THEVB</name>
<gene>
    <name evidence="1" type="primary">rpoZ</name>
    <name type="ordered locus">tsr2257</name>
</gene>
<dbReference type="EC" id="2.7.7.6" evidence="1"/>
<dbReference type="EMBL" id="BA000039">
    <property type="protein sequence ID" value="BAC09809.1"/>
    <property type="molecule type" value="Genomic_DNA"/>
</dbReference>
<dbReference type="RefSeq" id="NP_683047.1">
    <property type="nucleotide sequence ID" value="NC_004113.1"/>
</dbReference>
<dbReference type="RefSeq" id="WP_011058090.1">
    <property type="nucleotide sequence ID" value="NC_004113.1"/>
</dbReference>
<dbReference type="SMR" id="Q8DGQ8"/>
<dbReference type="STRING" id="197221.gene:10748873"/>
<dbReference type="EnsemblBacteria" id="BAC09809">
    <property type="protein sequence ID" value="BAC09809"/>
    <property type="gene ID" value="BAC09809"/>
</dbReference>
<dbReference type="KEGG" id="tel:tsr2257"/>
<dbReference type="PATRIC" id="fig|197221.4.peg.2366"/>
<dbReference type="eggNOG" id="ENOG5032RMS">
    <property type="taxonomic scope" value="Bacteria"/>
</dbReference>
<dbReference type="Proteomes" id="UP000000440">
    <property type="component" value="Chromosome"/>
</dbReference>
<dbReference type="GO" id="GO:0000428">
    <property type="term" value="C:DNA-directed RNA polymerase complex"/>
    <property type="evidence" value="ECO:0007669"/>
    <property type="project" value="UniProtKB-KW"/>
</dbReference>
<dbReference type="GO" id="GO:0003677">
    <property type="term" value="F:DNA binding"/>
    <property type="evidence" value="ECO:0007669"/>
    <property type="project" value="UniProtKB-UniRule"/>
</dbReference>
<dbReference type="GO" id="GO:0003899">
    <property type="term" value="F:DNA-directed RNA polymerase activity"/>
    <property type="evidence" value="ECO:0007669"/>
    <property type="project" value="UniProtKB-UniRule"/>
</dbReference>
<dbReference type="GO" id="GO:0006351">
    <property type="term" value="P:DNA-templated transcription"/>
    <property type="evidence" value="ECO:0007669"/>
    <property type="project" value="UniProtKB-UniRule"/>
</dbReference>
<dbReference type="HAMAP" id="MF_00366">
    <property type="entry name" value="RNApol_bact_RpoZ"/>
    <property type="match status" value="1"/>
</dbReference>
<dbReference type="InterPro" id="IPR003716">
    <property type="entry name" value="DNA-dir_RNA_pol_omega"/>
</dbReference>
<dbReference type="InterPro" id="IPR006110">
    <property type="entry name" value="Pol_omega/Rpo6/RPB6"/>
</dbReference>
<dbReference type="InterPro" id="IPR036161">
    <property type="entry name" value="RPB6/omega-like_sf"/>
</dbReference>
<dbReference type="NCBIfam" id="NF001574">
    <property type="entry name" value="PRK00392.2-5"/>
    <property type="match status" value="1"/>
</dbReference>
<dbReference type="Pfam" id="PF01192">
    <property type="entry name" value="RNA_pol_Rpb6"/>
    <property type="match status" value="1"/>
</dbReference>
<dbReference type="SUPFAM" id="SSF63562">
    <property type="entry name" value="RPB6/omega subunit-like"/>
    <property type="match status" value="1"/>
</dbReference>
<sequence>MQKRLHYSSLEINRRAEELIQHSANRYRITVQIANRAKQRRGLEASEDLDDLPLKPVIRAIIEMSDEVAQPELLADS</sequence>
<feature type="chain" id="PRO_0000128999" description="DNA-directed RNA polymerase subunit omega">
    <location>
        <begin position="1"/>
        <end position="77"/>
    </location>
</feature>
<protein>
    <recommendedName>
        <fullName evidence="1">DNA-directed RNA polymerase subunit omega</fullName>
        <shortName evidence="1">RNAP omega subunit</shortName>
        <ecNumber evidence="1">2.7.7.6</ecNumber>
    </recommendedName>
    <alternativeName>
        <fullName evidence="1">RNA polymerase omega subunit</fullName>
    </alternativeName>
    <alternativeName>
        <fullName evidence="1">Transcriptase subunit omega</fullName>
    </alternativeName>
</protein>
<evidence type="ECO:0000255" key="1">
    <source>
        <dbReference type="HAMAP-Rule" id="MF_00366"/>
    </source>
</evidence>
<reference key="1">
    <citation type="journal article" date="2002" name="DNA Res.">
        <title>Complete genome structure of the thermophilic cyanobacterium Thermosynechococcus elongatus BP-1.</title>
        <authorList>
            <person name="Nakamura Y."/>
            <person name="Kaneko T."/>
            <person name="Sato S."/>
            <person name="Ikeuchi M."/>
            <person name="Katoh H."/>
            <person name="Sasamoto S."/>
            <person name="Watanabe A."/>
            <person name="Iriguchi M."/>
            <person name="Kawashima K."/>
            <person name="Kimura T."/>
            <person name="Kishida Y."/>
            <person name="Kiyokawa C."/>
            <person name="Kohara M."/>
            <person name="Matsumoto M."/>
            <person name="Matsuno A."/>
            <person name="Nakazaki N."/>
            <person name="Shimpo S."/>
            <person name="Sugimoto M."/>
            <person name="Takeuchi C."/>
            <person name="Yamada M."/>
            <person name="Tabata S."/>
        </authorList>
    </citation>
    <scope>NUCLEOTIDE SEQUENCE [LARGE SCALE GENOMIC DNA]</scope>
    <source>
        <strain>NIES-2133 / IAM M-273 / BP-1</strain>
    </source>
</reference>
<organism>
    <name type="scientific">Thermosynechococcus vestitus (strain NIES-2133 / IAM M-273 / BP-1)</name>
    <dbReference type="NCBI Taxonomy" id="197221"/>
    <lineage>
        <taxon>Bacteria</taxon>
        <taxon>Bacillati</taxon>
        <taxon>Cyanobacteriota</taxon>
        <taxon>Cyanophyceae</taxon>
        <taxon>Acaryochloridales</taxon>
        <taxon>Thermosynechococcaceae</taxon>
        <taxon>Thermosynechococcus</taxon>
    </lineage>
</organism>
<comment type="function">
    <text evidence="1">Promotes RNA polymerase assembly. Latches the N- and C-terminal regions of the beta' subunit thereby facilitating its interaction with the beta and alpha subunits.</text>
</comment>
<comment type="catalytic activity">
    <reaction evidence="1">
        <text>RNA(n) + a ribonucleoside 5'-triphosphate = RNA(n+1) + diphosphate</text>
        <dbReference type="Rhea" id="RHEA:21248"/>
        <dbReference type="Rhea" id="RHEA-COMP:14527"/>
        <dbReference type="Rhea" id="RHEA-COMP:17342"/>
        <dbReference type="ChEBI" id="CHEBI:33019"/>
        <dbReference type="ChEBI" id="CHEBI:61557"/>
        <dbReference type="ChEBI" id="CHEBI:140395"/>
        <dbReference type="EC" id="2.7.7.6"/>
    </reaction>
</comment>
<comment type="subunit">
    <text evidence="1">In cyanobacteria the RNAP catalytic core is composed of 2 alpha, 1 beta, 1 beta', 1 gamma and 1 omega subunit. When a sigma factor is associated with the core the holoenzyme is formed, which can initiate transcription.</text>
</comment>
<comment type="similarity">
    <text evidence="1">Belongs to the RNA polymerase subunit omega family.</text>
</comment>
<accession>Q8DGQ8</accession>
<proteinExistence type="inferred from homology"/>